<keyword id="KW-0249">Electron transport</keyword>
<keyword id="KW-0349">Heme</keyword>
<keyword id="KW-0408">Iron</keyword>
<keyword id="KW-0472">Membrane</keyword>
<keyword id="KW-0479">Metal-binding</keyword>
<keyword id="KW-0496">Mitochondrion</keyword>
<keyword id="KW-0999">Mitochondrion inner membrane</keyword>
<keyword id="KW-0679">Respiratory chain</keyword>
<keyword id="KW-0812">Transmembrane</keyword>
<keyword id="KW-1133">Transmembrane helix</keyword>
<keyword id="KW-0813">Transport</keyword>
<keyword id="KW-0830">Ubiquinone</keyword>
<proteinExistence type="inferred from homology"/>
<organism>
    <name type="scientific">Pomatostomus ruficeps</name>
    <name type="common">Chestnut-crowned babbler</name>
    <dbReference type="NCBI Taxonomy" id="9176"/>
    <lineage>
        <taxon>Eukaryota</taxon>
        <taxon>Metazoa</taxon>
        <taxon>Chordata</taxon>
        <taxon>Craniata</taxon>
        <taxon>Vertebrata</taxon>
        <taxon>Euteleostomi</taxon>
        <taxon>Archelosauria</taxon>
        <taxon>Archosauria</taxon>
        <taxon>Dinosauria</taxon>
        <taxon>Saurischia</taxon>
        <taxon>Theropoda</taxon>
        <taxon>Coelurosauria</taxon>
        <taxon>Aves</taxon>
        <taxon>Neognathae</taxon>
        <taxon>Neoaves</taxon>
        <taxon>Telluraves</taxon>
        <taxon>Australaves</taxon>
        <taxon>Passeriformes</taxon>
        <taxon>Sylvioidea</taxon>
        <taxon>Timaliidae</taxon>
        <taxon>Pomatostomus</taxon>
    </lineage>
</organism>
<dbReference type="EMBL" id="M25686">
    <property type="protein sequence ID" value="AAA32137.1"/>
    <property type="molecule type" value="Genomic_DNA"/>
</dbReference>
<dbReference type="EMBL" id="X60937">
    <property type="protein sequence ID" value="CAA43272.1"/>
    <property type="molecule type" value="Genomic_DNA"/>
</dbReference>
<dbReference type="EMBL" id="X54911">
    <property type="protein sequence ID" value="CAA38683.1"/>
    <property type="molecule type" value="Genomic_DNA"/>
</dbReference>
<dbReference type="PIR" id="S22926">
    <property type="entry name" value="S22926"/>
</dbReference>
<dbReference type="GO" id="GO:0005743">
    <property type="term" value="C:mitochondrial inner membrane"/>
    <property type="evidence" value="ECO:0007669"/>
    <property type="project" value="UniProtKB-SubCell"/>
</dbReference>
<dbReference type="GO" id="GO:0046872">
    <property type="term" value="F:metal ion binding"/>
    <property type="evidence" value="ECO:0007669"/>
    <property type="project" value="UniProtKB-KW"/>
</dbReference>
<dbReference type="GO" id="GO:0008121">
    <property type="term" value="F:ubiquinol-cytochrome-c reductase activity"/>
    <property type="evidence" value="ECO:0007669"/>
    <property type="project" value="TreeGrafter"/>
</dbReference>
<dbReference type="GO" id="GO:0006122">
    <property type="term" value="P:mitochondrial electron transport, ubiquinol to cytochrome c"/>
    <property type="evidence" value="ECO:0007669"/>
    <property type="project" value="TreeGrafter"/>
</dbReference>
<dbReference type="CDD" id="cd00290">
    <property type="entry name" value="cytochrome_b_C"/>
    <property type="match status" value="1"/>
</dbReference>
<dbReference type="CDD" id="cd00284">
    <property type="entry name" value="Cytochrome_b_N"/>
    <property type="match status" value="1"/>
</dbReference>
<dbReference type="Gene3D" id="1.20.810.10">
    <property type="entry name" value="Cytochrome Bc1 Complex, Chain C"/>
    <property type="match status" value="1"/>
</dbReference>
<dbReference type="InterPro" id="IPR005798">
    <property type="entry name" value="Cyt_b/b6_C"/>
</dbReference>
<dbReference type="InterPro" id="IPR036150">
    <property type="entry name" value="Cyt_b/b6_C_sf"/>
</dbReference>
<dbReference type="InterPro" id="IPR005797">
    <property type="entry name" value="Cyt_b/b6_N"/>
</dbReference>
<dbReference type="InterPro" id="IPR027387">
    <property type="entry name" value="Cytb/b6-like_sf"/>
</dbReference>
<dbReference type="InterPro" id="IPR048260">
    <property type="entry name" value="Cytochrome_b_C_euk/bac"/>
</dbReference>
<dbReference type="InterPro" id="IPR048259">
    <property type="entry name" value="Cytochrome_b_N_euk/bac"/>
</dbReference>
<dbReference type="InterPro" id="IPR016174">
    <property type="entry name" value="Di-haem_cyt_TM"/>
</dbReference>
<dbReference type="PANTHER" id="PTHR19271">
    <property type="entry name" value="CYTOCHROME B"/>
    <property type="match status" value="1"/>
</dbReference>
<dbReference type="PANTHER" id="PTHR19271:SF16">
    <property type="entry name" value="CYTOCHROME B"/>
    <property type="match status" value="1"/>
</dbReference>
<dbReference type="Pfam" id="PF00032">
    <property type="entry name" value="Cytochrom_B_C"/>
    <property type="match status" value="1"/>
</dbReference>
<dbReference type="Pfam" id="PF00033">
    <property type="entry name" value="Cytochrome_B"/>
    <property type="match status" value="1"/>
</dbReference>
<dbReference type="SUPFAM" id="SSF81648">
    <property type="entry name" value="a domain/subunit of cytochrome bc1 complex (Ubiquinol-cytochrome c reductase)"/>
    <property type="match status" value="1"/>
</dbReference>
<dbReference type="SUPFAM" id="SSF81342">
    <property type="entry name" value="Transmembrane di-heme cytochromes"/>
    <property type="match status" value="1"/>
</dbReference>
<dbReference type="PROSITE" id="PS51003">
    <property type="entry name" value="CYTB_CTER"/>
    <property type="match status" value="1"/>
</dbReference>
<dbReference type="PROSITE" id="PS51002">
    <property type="entry name" value="CYTB_NTER"/>
    <property type="match status" value="1"/>
</dbReference>
<name>CYB_POMRU</name>
<sequence length="308" mass="34391">FGLLLGICLIVQIVTGLLLAAHYTADTSLAFASVAHMCRNVQFGWLIRNLHANGASFFFICIYLHIGRGLYYGSYLNKETWNIGVILLLTLMATAFVGYVXPWGQMSYWGATVITNLFSAIPYIGQTLVEWDWGGFSVDNPTLTRFFALHFLLPFVFAGLTLVHLTFLHETGSNKPLGIPSDCDKIPFHPYYSTKDVLGFVLMLIPLITLALFSPNLLGDPENFTPANPLATPPHIKPEWYFLFAYAILRSIPNKLGGVLALAASVLVLFLIPFLHTSKLRSMTFRPLSQILFWTLVANLLMLTWVSN</sequence>
<geneLocation type="mitochondrion"/>
<feature type="chain" id="PRO_0000061428" description="Cytochrome b">
    <location>
        <begin position="1" status="less than"/>
        <end position="308" status="greater than"/>
    </location>
</feature>
<feature type="transmembrane region" description="Helical" evidence="2">
    <location>
        <begin position="1"/>
        <end position="21"/>
    </location>
</feature>
<feature type="transmembrane region" description="Helical" evidence="2">
    <location>
        <begin position="45"/>
        <end position="66"/>
    </location>
</feature>
<feature type="transmembrane region" description="Helical" evidence="2">
    <location>
        <begin position="81"/>
        <end position="101"/>
    </location>
</feature>
<feature type="transmembrane region" description="Helical" evidence="2">
    <location>
        <begin position="146"/>
        <end position="166"/>
    </location>
</feature>
<feature type="transmembrane region" description="Helical" evidence="2">
    <location>
        <begin position="194"/>
        <end position="214"/>
    </location>
</feature>
<feature type="transmembrane region" description="Helical" evidence="2">
    <location>
        <begin position="256"/>
        <end position="276"/>
    </location>
</feature>
<feature type="transmembrane region" description="Helical" evidence="2">
    <location>
        <begin position="288"/>
        <end position="308"/>
    </location>
</feature>
<feature type="binding site" description="axial binding residue" evidence="2">
    <location>
        <position position="51"/>
    </location>
    <ligand>
        <name>heme b</name>
        <dbReference type="ChEBI" id="CHEBI:60344"/>
        <label>b562</label>
    </ligand>
    <ligandPart>
        <name>Fe</name>
        <dbReference type="ChEBI" id="CHEBI:18248"/>
    </ligandPart>
</feature>
<feature type="binding site" description="axial binding residue" evidence="2">
    <location>
        <position position="65"/>
    </location>
    <ligand>
        <name>heme b</name>
        <dbReference type="ChEBI" id="CHEBI:60344"/>
        <label>b566</label>
    </ligand>
    <ligandPart>
        <name>Fe</name>
        <dbReference type="ChEBI" id="CHEBI:18248"/>
    </ligandPart>
</feature>
<feature type="binding site" description="axial binding residue" evidence="2">
    <location>
        <position position="150"/>
    </location>
    <ligand>
        <name>heme b</name>
        <dbReference type="ChEBI" id="CHEBI:60344"/>
        <label>b562</label>
    </ligand>
    <ligandPart>
        <name>Fe</name>
        <dbReference type="ChEBI" id="CHEBI:18248"/>
    </ligandPart>
</feature>
<feature type="binding site" description="axial binding residue" evidence="2">
    <location>
        <position position="164"/>
    </location>
    <ligand>
        <name>heme b</name>
        <dbReference type="ChEBI" id="CHEBI:60344"/>
        <label>b566</label>
    </ligand>
    <ligandPart>
        <name>Fe</name>
        <dbReference type="ChEBI" id="CHEBI:18248"/>
    </ligandPart>
</feature>
<feature type="binding site" evidence="2">
    <location>
        <position position="169"/>
    </location>
    <ligand>
        <name>a ubiquinone</name>
        <dbReference type="ChEBI" id="CHEBI:16389"/>
    </ligand>
</feature>
<feature type="sequence conflict" description="In Ref. 4; AAA32137." evidence="5" ref="4">
    <original>G</original>
    <variation>A</variation>
    <location>
        <position position="16"/>
    </location>
</feature>
<feature type="sequence conflict" description="In Ref. 3; CAA38683." evidence="5" ref="3">
    <original>A</original>
    <variation>T</variation>
    <location>
        <position position="35"/>
    </location>
</feature>
<feature type="non-terminal residue">
    <location>
        <position position="1"/>
    </location>
</feature>
<feature type="non-terminal residue">
    <location>
        <position position="308"/>
    </location>
</feature>
<gene>
    <name type="primary">MT-CYB</name>
    <name type="synonym">COB</name>
    <name type="synonym">CYTB</name>
    <name type="synonym">MTCYB</name>
</gene>
<protein>
    <recommendedName>
        <fullName>Cytochrome b</fullName>
    </recommendedName>
    <alternativeName>
        <fullName>Complex III subunit 3</fullName>
    </alternativeName>
    <alternativeName>
        <fullName>Complex III subunit III</fullName>
    </alternativeName>
    <alternativeName>
        <fullName>Cytochrome b-c1 complex subunit 3</fullName>
    </alternativeName>
    <alternativeName>
        <fullName>Ubiquinol-cytochrome-c reductase complex cytochrome b subunit</fullName>
    </alternativeName>
</protein>
<reference key="1">
    <citation type="journal article" date="1991" name="Proc. R. Soc. B">
        <title>Mitochondrial resolution of a deep branch in the genealogical tree for perching birds.</title>
        <authorList>
            <person name="Edwards S.V."/>
            <person name="Arctander P."/>
            <person name="Wilson A.C."/>
        </authorList>
    </citation>
    <scope>NUCLEOTIDE SEQUENCE [GENOMIC DNA]</scope>
</reference>
<reference key="2">
    <citation type="journal article" date="1996" name="Proc. R. Soc. B">
        <authorList>
            <person name="Edwards S.V."/>
            <person name="Arctander P."/>
        </authorList>
    </citation>
    <scope>ERRATUM OF PUBMED:1676522</scope>
</reference>
<reference key="3">
    <citation type="journal article" date="1990" name="Genetics">
        <title>Phylogenetically informative length polymorphism and sequence variability in mitochondrial DNA of Australian songbirds (Pomatostomus).</title>
        <authorList>
            <person name="Edwards S.V."/>
            <person name="Wilson A.C."/>
        </authorList>
    </citation>
    <scope>NUCLEOTIDE SEQUENCE [GENOMIC DNA] OF 5-98</scope>
    <source>
        <tissue>Liver</tissue>
    </source>
</reference>
<reference key="4">
    <citation type="journal article" date="1989" name="Proc. Natl. Acad. Sci. U.S.A.">
        <title>Dynamics of mitochondrial DNA evolution in animals: amplification and sequencing with conserved primers.</title>
        <authorList>
            <person name="Kocher T.D."/>
            <person name="Thomas W.K."/>
            <person name="Meyer A."/>
            <person name="Edwards S.V."/>
            <person name="Paeaebo S."/>
            <person name="Villablanca F.X."/>
            <person name="Wilson A.C."/>
        </authorList>
    </citation>
    <scope>NUCLEOTIDE SEQUENCE [GENOMIC DNA] OF 15-93</scope>
</reference>
<accession>P29630</accession>
<accession>P16361</accession>
<accession>Q35742</accession>
<evidence type="ECO:0000250" key="1"/>
<evidence type="ECO:0000250" key="2">
    <source>
        <dbReference type="UniProtKB" id="P00157"/>
    </source>
</evidence>
<evidence type="ECO:0000255" key="3">
    <source>
        <dbReference type="PROSITE-ProRule" id="PRU00967"/>
    </source>
</evidence>
<evidence type="ECO:0000255" key="4">
    <source>
        <dbReference type="PROSITE-ProRule" id="PRU00968"/>
    </source>
</evidence>
<evidence type="ECO:0000305" key="5"/>
<comment type="function">
    <text evidence="2">Component of the ubiquinol-cytochrome c reductase complex (complex III or cytochrome b-c1 complex) that is part of the mitochondrial respiratory chain. The b-c1 complex mediates electron transfer from ubiquinol to cytochrome c. Contributes to the generation of a proton gradient across the mitochondrial membrane that is then used for ATP synthesis.</text>
</comment>
<comment type="cofactor">
    <cofactor evidence="2">
        <name>heme b</name>
        <dbReference type="ChEBI" id="CHEBI:60344"/>
    </cofactor>
    <text evidence="2">Binds 2 heme b groups non-covalently.</text>
</comment>
<comment type="subunit">
    <text evidence="2">The cytochrome bc1 complex contains 11 subunits: 3 respiratory subunits (MT-CYB, CYC1 and UQCRFS1), 2 core proteins (UQCRC1 and UQCRC2) and 6 low-molecular weight proteins (UQCRH/QCR6, UQCRB/QCR7, UQCRQ/QCR8, UQCR10/QCR9, UQCR11/QCR10 and a cleavage product of UQCRFS1). This cytochrome bc1 complex then forms a dimer.</text>
</comment>
<comment type="subcellular location">
    <subcellularLocation>
        <location evidence="2">Mitochondrion inner membrane</location>
        <topology evidence="2">Multi-pass membrane protein</topology>
    </subcellularLocation>
</comment>
<comment type="miscellaneous">
    <text evidence="1">Heme 1 (or BL or b562) is low-potential and absorbs at about 562 nm, and heme 2 (or BH or b566) is high-potential and absorbs at about 566 nm.</text>
</comment>
<comment type="similarity">
    <text evidence="3 4">Belongs to the cytochrome b family.</text>
</comment>
<comment type="caution">
    <text evidence="2">The full-length protein contains only eight transmembrane helices, not nine as predicted by bioinformatics tools.</text>
</comment>